<protein>
    <recommendedName>
        <fullName evidence="4">Polyglutamine-repeat protein pqn-41</fullName>
    </recommendedName>
    <alternativeName>
        <fullName evidence="8">Prion-like-(Q/N-rich)-domain-bearing protein 41</fullName>
    </alternativeName>
</protein>
<sequence>MKPKKLQQGSDSAHTSDTESTKTCEKTAKKLPKTQKKLQKSKKTAKKRRDEEFRIFFPPPRVNPPIKTPFRLHNTNCEHRDWISDNLCLPKYASYQTGWRISHKSMKSLVLMDKRRAEWLKMHNLYRKSEIRKAIWTIERKGAKKLDEMPGNWRISREKRNSLDLQEFPIKIEQFPVKKREKTAKNWRKIAVLVCFKRKTTTKNRYLRRPKTKNQRKIEFRRPKTSKNRKLRLKIRPRVRFIDRKLIRRRECLVDPQNLISWIRRQEKAENLRIFQEKQKRLQEQQEDAEWEQIEAQRANSDDVIEDKSLKMEVLDIVKHKNRNWIVVEKKGCEIQGMEYLLVLESEFNEQQTVRYDRQNVDHKFRKMRDEKKEIVEFVSSLPFYKPKPPKINYPTNAGEYEEQEIELERRRLEEEERDQNDKKLEIEDRNHFKKWQKRRNLIKIYRNSIRREIWRRRRGRNSTENSDSESSSEASEPPDDVITKEEPTDFSEENLVKKEEICDDFEHKIEEDVKPDVYKLNINKMISPPSPPPKKGILLKKDTKKRGEKRVKTVQFKLTKRQKLAKLWKPPTWQIRQILRAAADAKGYKIRSGRSRYNEKIRRLNHFNGQKLGFKSAPTRIDTFEKGIDVREQPIPFVEEFVLDDHALLTFASFDDLKAYEEAYSLRQQDVIDEFWRHQCLKNIESFEKDDVERAEMRHEIEKLETEMRCQKMNENAEIDQENIESFETAGRQIENIIKNTGDCAFETLEEYFSISADFEKNEELRAEEEQLEIEMEHWERELEEMIDVIKREFSIENLMMRMLKNRHLLTMRLVVSGTNQSSIDRENLLRKTKKLLEELKNLRIAAQNRLKIDFDRNERMLYRLRNAKQKAAKRARKLVKNWKKSAQNKSGVLKINGNHVINHDVVVKKWKVELKIEGNGESPRKVVRKAKETSGYWDFRWNFTKFAWKSDVLKRKQRFGKHSARRAIAFGVKIEEIHSETEFEKLLSEYVEYEESDIQNQVSIDRKIDIITKIKTITLNDVRAKAIEMQKQIVEKAVDLMIKSRLDEAAREHQEWLQSDECKRENQLRQRQQNFFDLTSSSPATSSFVTTQVVVPRLTHLEERLIELGVEHEVVQHTQRLQSEFENYHHLQQQHNHQNFQQQQQGNHDFVTPKAPQDKQKRKYTKRKALLNTAVASSSDQNGMKSPGSSAMENAAAAAQAAQAQAQATIPTPTVNLPDVVAIAAAAATAQPSAAAAKRPASETPPNGLPKVPRHDEQQQQQNNAHSIVMGAREGFLAMNPSLAGHVFPASSASTSGAPGAHSATTSGGAGLIGISAATQAQLQAQQAAQAAAAAAAAAAAQATQSLYINTSVAPGAQAASAQGGGGGQVVAAQQSNQAATAEAIRLLQGLPPFLTAGSGSAGIPYFSALSQQLNQLGAAAPGAPGTLNGLQFPANAALGPQLAGAALLAAVPGAQQQIKRPGRWSGMHVKIATDIQNYKQSQEKKLPTDIQSTSSSSAAPASAPAPRAGAGAGATSSSAASSSTSTPSSSSHHKKSSPPHHQKSAAPSAPPRDVTSAHAPPPPASSAPIVGAPRQGATPQAAPATTPATTSQHQQSIQFSQFPPPQLSGGAAYAGNPQLMAAAINEATRRVAATPKPPVVRPPSAATQQQPVSVTSQASQQQQQFQQIQQQRAAAIAAAAAATSQQAPPAQASQATSAAQQIATSMGLQPAQVTDLVNQHAQQYLLLQQQQQQQQREQQQQQQLQAQQVQQQLIAHLLGGGHQAQQAAPAVSVAQQQQQQVAAAAAAQQQHNAQLQNIMILTALQQQMERGAAAGAAASLPYQLQLAQAQAQAQAQQAPPTSQPSQAATPQQQQQLDLIRQMEAVAQVQQAHAQAQAQAQAQAQQMQQQQIQQMLMAGQGGPNGQDLIRLLQAAQQQSQAQQQQQQQQAVVAAAQQQQQQQQHNQQLAAAQAAAAAAAAGRPTQNQYEALLQQQRLLAAQQQAAAGASAQQQAAAAAAQAQAQQFQQQLLGLQPNLLLAQVQQAQQAQAQAQAQAQQKPPQMPNGR</sequence>
<evidence type="ECO:0000255" key="1"/>
<evidence type="ECO:0000256" key="2">
    <source>
        <dbReference type="SAM" id="MobiDB-lite"/>
    </source>
</evidence>
<evidence type="ECO:0000269" key="3">
    <source>
    </source>
</evidence>
<evidence type="ECO:0000303" key="4">
    <source>
    </source>
</evidence>
<evidence type="ECO:0000305" key="5"/>
<evidence type="ECO:0000312" key="6">
    <source>
        <dbReference type="Proteomes" id="UP000001940"/>
    </source>
</evidence>
<evidence type="ECO:0000312" key="7">
    <source>
        <dbReference type="WormBase" id="F53A3.4a"/>
    </source>
</evidence>
<evidence type="ECO:0000312" key="8">
    <source>
        <dbReference type="WormBase" id="F53A3.4b"/>
    </source>
</evidence>
<evidence type="ECO:0000312" key="9">
    <source>
        <dbReference type="WormBase" id="F53A3.4c"/>
    </source>
</evidence>
<evidence type="ECO:0000312" key="10">
    <source>
        <dbReference type="WormBase" id="F53A3.4d"/>
    </source>
</evidence>
<keyword id="KW-0025">Alternative splicing</keyword>
<keyword id="KW-0175">Coiled coil</keyword>
<keyword id="KW-0963">Cytoplasm</keyword>
<keyword id="KW-1185">Reference proteome</keyword>
<name>PQN41_CAEEL</name>
<dbReference type="EMBL" id="BX284603">
    <property type="protein sequence ID" value="CCD62158.1"/>
    <property type="molecule type" value="Genomic_DNA"/>
</dbReference>
<dbReference type="EMBL" id="BX284603">
    <property type="protein sequence ID" value="CCD62159.1"/>
    <property type="molecule type" value="Genomic_DNA"/>
</dbReference>
<dbReference type="EMBL" id="BX284603">
    <property type="protein sequence ID" value="CCD62160.1"/>
    <property type="molecule type" value="Genomic_DNA"/>
</dbReference>
<dbReference type="EMBL" id="BX284603">
    <property type="protein sequence ID" value="CDG24084.1"/>
    <property type="molecule type" value="Genomic_DNA"/>
</dbReference>
<dbReference type="RefSeq" id="NP_001122699.2">
    <molecule id="C7IVR4-1"/>
    <property type="nucleotide sequence ID" value="NM_001129227.4"/>
</dbReference>
<dbReference type="RefSeq" id="NP_001254849.1">
    <molecule id="C7IVR4-3"/>
    <property type="nucleotide sequence ID" value="NM_001267920.3"/>
</dbReference>
<dbReference type="RefSeq" id="NP_001293605.1">
    <property type="nucleotide sequence ID" value="NM_001306676.1"/>
</dbReference>
<dbReference type="RefSeq" id="NP_001360184.1">
    <molecule id="C7IVR4-4"/>
    <property type="nucleotide sequence ID" value="NM_001373851.2"/>
</dbReference>
<dbReference type="RefSeq" id="NP_497478.2">
    <molecule id="C7IVR4-2"/>
    <property type="nucleotide sequence ID" value="NM_065077.6"/>
</dbReference>
<dbReference type="SMR" id="C7IVR4"/>
<dbReference type="FunCoup" id="C7IVR4">
    <property type="interactions" value="962"/>
</dbReference>
<dbReference type="IntAct" id="C7IVR4">
    <property type="interactions" value="1"/>
</dbReference>
<dbReference type="STRING" id="6239.F53A3.4b.1"/>
<dbReference type="PaxDb" id="6239-F53A3.4b"/>
<dbReference type="PeptideAtlas" id="C7IVR4"/>
<dbReference type="EnsemblMetazoa" id="F53A3.4a.1">
    <molecule id="C7IVR4-2"/>
    <property type="protein sequence ID" value="F53A3.4a.1"/>
    <property type="gene ID" value="WBGene00004128"/>
</dbReference>
<dbReference type="EnsemblMetazoa" id="F53A3.4b.1">
    <molecule id="C7IVR4-1"/>
    <property type="protein sequence ID" value="F53A3.4b.1"/>
    <property type="gene ID" value="WBGene00004128"/>
</dbReference>
<dbReference type="EnsemblMetazoa" id="F53A3.4c.1">
    <molecule id="C7IVR4-3"/>
    <property type="protein sequence ID" value="F53A3.4c.1"/>
    <property type="gene ID" value="WBGene00004128"/>
</dbReference>
<dbReference type="EnsemblMetazoa" id="F53A3.4d.1">
    <molecule id="C7IVR4-4"/>
    <property type="protein sequence ID" value="F53A3.4d.1"/>
    <property type="gene ID" value="WBGene00004128"/>
</dbReference>
<dbReference type="EnsemblMetazoa" id="F53A3.4d.2">
    <molecule id="C7IVR4-4"/>
    <property type="protein sequence ID" value="F53A3.4d.2"/>
    <property type="gene ID" value="WBGene00004128"/>
</dbReference>
<dbReference type="EnsemblMetazoa" id="F53A3.4d.3">
    <molecule id="C7IVR4-4"/>
    <property type="protein sequence ID" value="F53A3.4d.3"/>
    <property type="gene ID" value="WBGene00004128"/>
</dbReference>
<dbReference type="GeneID" id="175335"/>
<dbReference type="KEGG" id="cel:CELE_F53A3.4"/>
<dbReference type="AGR" id="WB:WBGene00004128"/>
<dbReference type="CTD" id="175335"/>
<dbReference type="WormBase" id="F53A3.4a">
    <molecule id="C7IVR4-2"/>
    <property type="protein sequence ID" value="CE44019"/>
    <property type="gene ID" value="WBGene00004128"/>
    <property type="gene designation" value="pqn-41"/>
</dbReference>
<dbReference type="WormBase" id="F53A3.4b">
    <molecule id="C7IVR4-1"/>
    <property type="protein sequence ID" value="CE44055"/>
    <property type="gene ID" value="WBGene00004128"/>
    <property type="gene designation" value="pqn-41"/>
</dbReference>
<dbReference type="WormBase" id="F53A3.4c">
    <molecule id="C7IVR4-3"/>
    <property type="protein sequence ID" value="CE44091"/>
    <property type="gene ID" value="WBGene00004128"/>
    <property type="gene designation" value="pqn-41"/>
</dbReference>
<dbReference type="WormBase" id="F53A3.4d">
    <molecule id="C7IVR4-4"/>
    <property type="protein sequence ID" value="CE48496"/>
    <property type="gene ID" value="WBGene00004128"/>
    <property type="gene designation" value="pqn-41"/>
</dbReference>
<dbReference type="eggNOG" id="KOG1721">
    <property type="taxonomic scope" value="Eukaryota"/>
</dbReference>
<dbReference type="InParanoid" id="C7IVR4"/>
<dbReference type="OrthoDB" id="5852085at2759"/>
<dbReference type="PRO" id="PR:C7IVR4"/>
<dbReference type="Proteomes" id="UP000001940">
    <property type="component" value="Chromosome III"/>
</dbReference>
<dbReference type="Bgee" id="WBGene00004128">
    <property type="expression patterns" value="Expressed in pharyngeal muscle cell (C elegans) and 4 other cell types or tissues"/>
</dbReference>
<dbReference type="GO" id="GO:0005737">
    <property type="term" value="C:cytoplasm"/>
    <property type="evidence" value="ECO:0007669"/>
    <property type="project" value="UniProtKB-SubCell"/>
</dbReference>
<dbReference type="InterPro" id="IPR052886">
    <property type="entry name" value="LCS_TC/CRSF"/>
</dbReference>
<dbReference type="PANTHER" id="PTHR23261">
    <property type="entry name" value="GROUNDHOG-RELATED"/>
    <property type="match status" value="1"/>
</dbReference>
<dbReference type="PANTHER" id="PTHR23261:SF72">
    <property type="entry name" value="POLYGLUTAMINE-REPEAT PROTEIN PQN-41"/>
    <property type="match status" value="1"/>
</dbReference>
<reference evidence="5" key="1">
    <citation type="journal article" date="2012" name="Science">
        <title>Control of nonapoptotic developmental cell death in Caenorhabditis elegans by a polyglutamine-repeat protein.</title>
        <authorList>
            <person name="Blum E.S."/>
            <person name="Abraham M.C."/>
            <person name="Yoshimura S."/>
            <person name="Lu Y."/>
            <person name="Shaham S."/>
        </authorList>
    </citation>
    <scope>NUCLEOTIDE SEQUENCE [MRNA] (ISOFORMS A; B AND D)</scope>
    <scope>FUNCTION</scope>
    <scope>SUBCELLULAR LOCATION</scope>
    <scope>TISSUE SPECIFICITY</scope>
    <scope>DOMAIN</scope>
    <scope>DISRUPTION PHENOTYPE</scope>
    <scope>MUTAGENESIS OF GLN-1734; GLN-1737; ALA-1874; GLN-1877; ALA-1998 AND ALA-2001</scope>
</reference>
<reference evidence="6" key="2">
    <citation type="journal article" date="1998" name="Science">
        <title>Genome sequence of the nematode C. elegans: a platform for investigating biology.</title>
        <authorList>
            <consortium name="The C. elegans sequencing consortium"/>
        </authorList>
    </citation>
    <scope>NUCLEOTIDE SEQUENCE [LARGE SCALE GENOMIC DNA]</scope>
    <source>
        <strain evidence="6">Bristol N2</strain>
    </source>
</reference>
<proteinExistence type="evidence at protein level"/>
<comment type="function">
    <molecule>Isoform d</molecule>
    <text evidence="3">In males, required for non-apoptotic death of the linker cell once it has finished guiding gonad elongation at the end of larval development. May be involved in nuclear envelope crenellation in the linker cell.</text>
</comment>
<comment type="function">
    <molecule>Isoform a</molecule>
    <text evidence="3">In males, promotes linker cell survival.</text>
</comment>
<comment type="function">
    <molecule>Isoform b</molecule>
    <text evidence="3">In males, promotes linker cell survival.</text>
</comment>
<comment type="subcellular location">
    <molecule>Isoform d</molecule>
    <subcellularLocation>
        <location evidence="3">Cytoplasm</location>
    </subcellularLocation>
    <text evidence="3">Forms aggregates.</text>
</comment>
<comment type="subcellular location">
    <molecule>Isoform a</molecule>
    <subcellularLocation>
        <location evidence="3">Cytoplasm</location>
    </subcellularLocation>
    <text evidence="3">Does not form aggregates.</text>
</comment>
<comment type="subcellular location">
    <molecule>Isoform b</molecule>
    <subcellularLocation>
        <location evidence="3">Cytoplasm</location>
    </subcellularLocation>
    <text evidence="3">Does not form aggregates.</text>
</comment>
<comment type="alternative products">
    <event type="alternative splicing"/>
    <isoform>
        <id>C7IVR4-1</id>
        <name evidence="8">b</name>
        <name evidence="4">PQN-41B</name>
        <sequence type="displayed"/>
    </isoform>
    <isoform>
        <id>C7IVR4-2</id>
        <name evidence="7">a</name>
        <name evidence="4">PQN-41A</name>
        <sequence type="described" ref="VSP_057820"/>
    </isoform>
    <isoform>
        <id>C7IVR4-3</id>
        <name evidence="9">c</name>
        <sequence type="described" ref="VSP_057818 VSP_057819"/>
    </isoform>
    <isoform>
        <id>C7IVR4-4</id>
        <name evidence="10">d</name>
        <name evidence="4">PQN-41C</name>
        <sequence type="described" ref="VSP_057817"/>
    </isoform>
</comment>
<comment type="tissue specificity">
    <text evidence="3">Expressed in the linker cell just before it dies.</text>
</comment>
<comment type="domain">
    <text evidence="3">The coiled-coil domains in isoform d are important for linker cell death.</text>
</comment>
<comment type="disruption phenotype">
    <text evidence="3">RNAi-mediated knockdown causes the survival of the linker cell in 16 percent of animals.</text>
</comment>
<feature type="chain" id="PRO_0000433600" description="Polyglutamine-repeat protein pqn-41" evidence="5">
    <location>
        <begin position="1"/>
        <end position="2049"/>
    </location>
</feature>
<feature type="region of interest" description="Sufficient to prevent linker cell death" evidence="3">
    <location>
        <begin position="1"/>
        <end position="1601"/>
    </location>
</feature>
<feature type="region of interest" description="Disordered" evidence="2">
    <location>
        <begin position="1"/>
        <end position="58"/>
    </location>
</feature>
<feature type="region of interest" description="Disordered" evidence="2">
    <location>
        <begin position="459"/>
        <end position="492"/>
    </location>
</feature>
<feature type="region of interest" description="Disordered" evidence="2">
    <location>
        <begin position="1134"/>
        <end position="1198"/>
    </location>
</feature>
<feature type="region of interest" description="Disordered" evidence="2">
    <location>
        <begin position="1236"/>
        <end position="1265"/>
    </location>
</feature>
<feature type="region of interest" description="Disordered" evidence="2">
    <location>
        <begin position="1481"/>
        <end position="1616"/>
    </location>
</feature>
<feature type="region of interest" description="Disordered" evidence="2">
    <location>
        <begin position="1636"/>
        <end position="1661"/>
    </location>
</feature>
<feature type="region of interest" description="Disordered" evidence="2">
    <location>
        <begin position="1836"/>
        <end position="1858"/>
    </location>
</feature>
<feature type="coiled-coil region" evidence="1">
    <location>
        <begin position="264"/>
        <end position="302"/>
    </location>
</feature>
<feature type="coiled-coil region" evidence="1">
    <location>
        <begin position="396"/>
        <end position="432"/>
    </location>
</feature>
<feature type="coiled-coil region" evidence="1">
    <location>
        <begin position="686"/>
        <end position="730"/>
    </location>
</feature>
<feature type="coiled-coil region" evidence="1">
    <location>
        <begin position="756"/>
        <end position="796"/>
    </location>
</feature>
<feature type="coiled-coil region" evidence="1">
    <location>
        <begin position="822"/>
        <end position="880"/>
    </location>
</feature>
<feature type="coiled-coil region" evidence="1">
    <location>
        <begin position="1659"/>
        <end position="1685"/>
    </location>
</feature>
<feature type="coiled-coil region" evidence="1">
    <location>
        <begin position="1725"/>
        <end position="1801"/>
    </location>
</feature>
<feature type="coiled-coil region" evidence="1">
    <location>
        <begin position="1863"/>
        <end position="1961"/>
    </location>
</feature>
<feature type="coiled-coil region" evidence="1">
    <location>
        <begin position="1991"/>
        <end position="2041"/>
    </location>
</feature>
<feature type="compositionally biased region" description="Basic and acidic residues" evidence="2">
    <location>
        <begin position="14"/>
        <end position="28"/>
    </location>
</feature>
<feature type="compositionally biased region" description="Basic residues" evidence="2">
    <location>
        <begin position="29"/>
        <end position="47"/>
    </location>
</feature>
<feature type="compositionally biased region" description="Low complexity" evidence="2">
    <location>
        <begin position="463"/>
        <end position="476"/>
    </location>
</feature>
<feature type="compositionally biased region" description="Low complexity" evidence="2">
    <location>
        <begin position="1134"/>
        <end position="1150"/>
    </location>
</feature>
<feature type="compositionally biased region" description="Basic residues" evidence="2">
    <location>
        <begin position="1162"/>
        <end position="1171"/>
    </location>
</feature>
<feature type="compositionally biased region" description="Polar residues" evidence="2">
    <location>
        <begin position="1176"/>
        <end position="1194"/>
    </location>
</feature>
<feature type="compositionally biased region" description="Low complexity" evidence="2">
    <location>
        <begin position="1495"/>
        <end position="1533"/>
    </location>
</feature>
<feature type="compositionally biased region" description="Basic residues" evidence="2">
    <location>
        <begin position="1534"/>
        <end position="1546"/>
    </location>
</feature>
<feature type="compositionally biased region" description="Low complexity" evidence="2">
    <location>
        <begin position="1569"/>
        <end position="1604"/>
    </location>
</feature>
<feature type="compositionally biased region" description="Low complexity" evidence="2">
    <location>
        <begin position="1649"/>
        <end position="1661"/>
    </location>
</feature>
<feature type="splice variant" id="VSP_057817" description="In isoform d." evidence="5">
    <location>
        <begin position="1"/>
        <end position="1622"/>
    </location>
</feature>
<feature type="splice variant" id="VSP_057818" description="In isoform c." evidence="5">
    <original>RPGRWSGMHVKIATDI</original>
    <variation>VVFLKAKIEVFWNFQQ</variation>
    <location>
        <begin position="1463"/>
        <end position="1478"/>
    </location>
</feature>
<feature type="splice variant" id="VSP_057819" description="In isoform c." evidence="5">
    <location>
        <begin position="1479"/>
        <end position="2049"/>
    </location>
</feature>
<feature type="splice variant" id="VSP_057820" description="In isoform a." evidence="5">
    <location>
        <begin position="1601"/>
        <end position="1635"/>
    </location>
</feature>
<feature type="mutagenesis site" description="Probable loss of putative coiled-coil structure. Survival of linker cell in 14 percent of animals; when associated with P-1737; P-1874; P-1877; P-1998 and P-2001; in isoform d." evidence="3">
    <original>Q</original>
    <variation>P</variation>
    <location>
        <position position="1734"/>
    </location>
</feature>
<feature type="mutagenesis site" description="Probable loss of putative coiled-coil structure. Survival of linker cell in 14 percent of animals; when associated with P-1734; P-1874; P-1877; P-1998 and P-2001; in isoform d." evidence="3">
    <original>Q</original>
    <variation>P</variation>
    <location>
        <position position="1737"/>
    </location>
</feature>
<feature type="mutagenesis site" description="Probable loss of putative coiled-coil structure. Survival of linker cell in 14 percent of animals; when associated with P-1734; P-1737; P-1877; P-1998 and P-2001; in isoform d." evidence="3">
    <original>A</original>
    <variation>P</variation>
    <location>
        <position position="1874"/>
    </location>
</feature>
<feature type="mutagenesis site" description="Probable loss of putative coiled-coil structure. Survival of linker cell in 14 percent of animals; when associated with P-1734; P-1737; P-1874; P-1998 and P-2001; in isoform d." evidence="3">
    <original>Q</original>
    <variation>P</variation>
    <location>
        <position position="1877"/>
    </location>
</feature>
<feature type="mutagenesis site" description="Probable loss of putative coiled-coil structure. Survival of linker cell in 14 percent of animals; when associated with P-1734; P-1737; P-1874; P-1877 and P-2001; in isoform d." evidence="3">
    <original>A</original>
    <variation>P</variation>
    <location>
        <position position="1998"/>
    </location>
</feature>
<feature type="mutagenesis site" description="Probable loss of putative coiled-coil structure. Survival of linker cell in 14 percent of animals; when associated with P-1734; P-1737; P-1874; P-1877 and P-1998; in isoform d." evidence="3">
    <original>A</original>
    <variation>P</variation>
    <location>
        <position position="2001"/>
    </location>
</feature>
<gene>
    <name evidence="8" type="primary">pqn-41</name>
    <name evidence="8" type="ORF">F53A3.4</name>
</gene>
<organism evidence="6">
    <name type="scientific">Caenorhabditis elegans</name>
    <dbReference type="NCBI Taxonomy" id="6239"/>
    <lineage>
        <taxon>Eukaryota</taxon>
        <taxon>Metazoa</taxon>
        <taxon>Ecdysozoa</taxon>
        <taxon>Nematoda</taxon>
        <taxon>Chromadorea</taxon>
        <taxon>Rhabditida</taxon>
        <taxon>Rhabditina</taxon>
        <taxon>Rhabditomorpha</taxon>
        <taxon>Rhabditoidea</taxon>
        <taxon>Rhabditidae</taxon>
        <taxon>Peloderinae</taxon>
        <taxon>Caenorhabditis</taxon>
    </lineage>
</organism>
<accession>C7IVR4</accession>
<accession>C7IVR5</accession>
<accession>C7IVR6</accession>
<accession>G4RT56</accession>
<accession>G4RT57</accession>
<accession>G4RT58</accession>
<accession>S6FMX9</accession>